<accession>Q473F6</accession>
<organism>
    <name type="scientific">Cupriavidus pinatubonensis (strain JMP 134 / LMG 1197)</name>
    <name type="common">Cupriavidus necator (strain JMP 134)</name>
    <dbReference type="NCBI Taxonomy" id="264198"/>
    <lineage>
        <taxon>Bacteria</taxon>
        <taxon>Pseudomonadati</taxon>
        <taxon>Pseudomonadota</taxon>
        <taxon>Betaproteobacteria</taxon>
        <taxon>Burkholderiales</taxon>
        <taxon>Burkholderiaceae</taxon>
        <taxon>Cupriavidus</taxon>
    </lineage>
</organism>
<keyword id="KW-0274">FAD</keyword>
<keyword id="KW-0285">Flavoprotein</keyword>
<keyword id="KW-0521">NADP</keyword>
<keyword id="KW-0560">Oxidoreductase</keyword>
<dbReference type="EC" id="1.18.1.2" evidence="1"/>
<dbReference type="EMBL" id="CP000090">
    <property type="protein sequence ID" value="AAZ60477.1"/>
    <property type="molecule type" value="Genomic_DNA"/>
</dbReference>
<dbReference type="SMR" id="Q473F6"/>
<dbReference type="STRING" id="264198.Reut_A1099"/>
<dbReference type="KEGG" id="reu:Reut_A1099"/>
<dbReference type="eggNOG" id="COG0492">
    <property type="taxonomic scope" value="Bacteria"/>
</dbReference>
<dbReference type="HOGENOM" id="CLU_031864_5_5_4"/>
<dbReference type="OrthoDB" id="9806179at2"/>
<dbReference type="GO" id="GO:0004324">
    <property type="term" value="F:ferredoxin-NADP+ reductase activity"/>
    <property type="evidence" value="ECO:0007669"/>
    <property type="project" value="UniProtKB-UniRule"/>
</dbReference>
<dbReference type="GO" id="GO:0050660">
    <property type="term" value="F:flavin adenine dinucleotide binding"/>
    <property type="evidence" value="ECO:0007669"/>
    <property type="project" value="UniProtKB-UniRule"/>
</dbReference>
<dbReference type="GO" id="GO:0050661">
    <property type="term" value="F:NADP binding"/>
    <property type="evidence" value="ECO:0007669"/>
    <property type="project" value="UniProtKB-UniRule"/>
</dbReference>
<dbReference type="Gene3D" id="3.50.50.60">
    <property type="entry name" value="FAD/NAD(P)-binding domain"/>
    <property type="match status" value="2"/>
</dbReference>
<dbReference type="HAMAP" id="MF_01685">
    <property type="entry name" value="FENR2"/>
    <property type="match status" value="1"/>
</dbReference>
<dbReference type="InterPro" id="IPR036188">
    <property type="entry name" value="FAD/NAD-bd_sf"/>
</dbReference>
<dbReference type="InterPro" id="IPR023753">
    <property type="entry name" value="FAD/NAD-binding_dom"/>
</dbReference>
<dbReference type="InterPro" id="IPR022890">
    <property type="entry name" value="Fd--NADP_Rdtase_type_2"/>
</dbReference>
<dbReference type="InterPro" id="IPR050097">
    <property type="entry name" value="Ferredoxin-NADP_redctase_2"/>
</dbReference>
<dbReference type="PANTHER" id="PTHR48105">
    <property type="entry name" value="THIOREDOXIN REDUCTASE 1-RELATED-RELATED"/>
    <property type="match status" value="1"/>
</dbReference>
<dbReference type="Pfam" id="PF07992">
    <property type="entry name" value="Pyr_redox_2"/>
    <property type="match status" value="1"/>
</dbReference>
<dbReference type="PRINTS" id="PR00368">
    <property type="entry name" value="FADPNR"/>
</dbReference>
<dbReference type="PRINTS" id="PR00469">
    <property type="entry name" value="PNDRDTASEII"/>
</dbReference>
<dbReference type="SUPFAM" id="SSF51905">
    <property type="entry name" value="FAD/NAD(P)-binding domain"/>
    <property type="match status" value="1"/>
</dbReference>
<reference key="1">
    <citation type="journal article" date="2010" name="PLoS ONE">
        <title>The complete multipartite genome sequence of Cupriavidus necator JMP134, a versatile pollutant degrader.</title>
        <authorList>
            <person name="Lykidis A."/>
            <person name="Perez-Pantoja D."/>
            <person name="Ledger T."/>
            <person name="Mavromatis K."/>
            <person name="Anderson I.J."/>
            <person name="Ivanova N.N."/>
            <person name="Hooper S.D."/>
            <person name="Lapidus A."/>
            <person name="Lucas S."/>
            <person name="Gonzalez B."/>
            <person name="Kyrpides N.C."/>
        </authorList>
    </citation>
    <scope>NUCLEOTIDE SEQUENCE [LARGE SCALE GENOMIC DNA]</scope>
    <source>
        <strain>JMP134 / LMG 1197</strain>
    </source>
</reference>
<comment type="catalytic activity">
    <reaction evidence="1">
        <text>2 reduced [2Fe-2S]-[ferredoxin] + NADP(+) + H(+) = 2 oxidized [2Fe-2S]-[ferredoxin] + NADPH</text>
        <dbReference type="Rhea" id="RHEA:20125"/>
        <dbReference type="Rhea" id="RHEA-COMP:10000"/>
        <dbReference type="Rhea" id="RHEA-COMP:10001"/>
        <dbReference type="ChEBI" id="CHEBI:15378"/>
        <dbReference type="ChEBI" id="CHEBI:33737"/>
        <dbReference type="ChEBI" id="CHEBI:33738"/>
        <dbReference type="ChEBI" id="CHEBI:57783"/>
        <dbReference type="ChEBI" id="CHEBI:58349"/>
        <dbReference type="EC" id="1.18.1.2"/>
    </reaction>
</comment>
<comment type="cofactor">
    <cofactor evidence="1">
        <name>FAD</name>
        <dbReference type="ChEBI" id="CHEBI:57692"/>
    </cofactor>
    <text evidence="1">Binds 1 FAD per subunit.</text>
</comment>
<comment type="subunit">
    <text evidence="1">Homodimer.</text>
</comment>
<comment type="similarity">
    <text evidence="1">Belongs to the ferredoxin--NADP reductase type 2 family.</text>
</comment>
<name>FENR1_CUPPJ</name>
<protein>
    <recommendedName>
        <fullName evidence="1">Ferredoxin--NADP reductase 1</fullName>
        <shortName evidence="1">FNR 1</shortName>
        <shortName evidence="1">Fd-NADP(+) reductase 1</shortName>
        <ecNumber evidence="1">1.18.1.2</ecNumber>
    </recommendedName>
</protein>
<proteinExistence type="inferred from homology"/>
<evidence type="ECO:0000255" key="1">
    <source>
        <dbReference type="HAMAP-Rule" id="MF_01685"/>
    </source>
</evidence>
<feature type="chain" id="PRO_0000364905" description="Ferredoxin--NADP reductase 1">
    <location>
        <begin position="1"/>
        <end position="362"/>
    </location>
</feature>
<feature type="binding site" evidence="1">
    <location>
        <position position="47"/>
    </location>
    <ligand>
        <name>FAD</name>
        <dbReference type="ChEBI" id="CHEBI:57692"/>
    </ligand>
</feature>
<feature type="binding site" evidence="1">
    <location>
        <position position="55"/>
    </location>
    <ligand>
        <name>FAD</name>
        <dbReference type="ChEBI" id="CHEBI:57692"/>
    </ligand>
</feature>
<feature type="binding site" evidence="1">
    <location>
        <position position="60"/>
    </location>
    <ligand>
        <name>FAD</name>
        <dbReference type="ChEBI" id="CHEBI:57692"/>
    </ligand>
</feature>
<feature type="binding site" evidence="1">
    <location>
        <position position="100"/>
    </location>
    <ligand>
        <name>FAD</name>
        <dbReference type="ChEBI" id="CHEBI:57692"/>
    </ligand>
</feature>
<feature type="binding site" evidence="1">
    <location>
        <position position="141"/>
    </location>
    <ligand>
        <name>FAD</name>
        <dbReference type="ChEBI" id="CHEBI:57692"/>
    </ligand>
</feature>
<feature type="binding site" evidence="1">
    <location>
        <position position="309"/>
    </location>
    <ligand>
        <name>FAD</name>
        <dbReference type="ChEBI" id="CHEBI:57692"/>
    </ligand>
</feature>
<feature type="binding site" evidence="1">
    <location>
        <position position="350"/>
    </location>
    <ligand>
        <name>FAD</name>
        <dbReference type="ChEBI" id="CHEBI:57692"/>
    </ligand>
</feature>
<gene>
    <name type="ordered locus">Reut_A1099</name>
</gene>
<sequence length="362" mass="38563">MSTDNTTALPGAADTTTTDVLIVGAGPVGLFAAFQAGVLGLKCELIDVLDRAGGQCTELYPEKPIYDIPAVPGCLAQDLVDRLLEQCAPFAFPMHFNQRAESVAEVLPAQDGVHSRLLVTTDSGKRFDVAAVLVCAGAGAFAPQRVSLPEAPGLEGRHVHYAVRDVSRFAGKRVVVAGGGDSALDWALALRKVAARVTLLHRREGFRAADGSVAEMRAAVEAGEMDFVIGMLGALKTSGEGEHAALMEIEIRSRDGVQTLAADELVALYGLVSEPGPIAQWDMDMRAGRILVDTTTYESSRRGIFAAGDIAYYANKQKLILSGFHEAALALRKAYHYAFPQKSLVHVHTSNNAALKEKLTHA</sequence>